<reference key="1">
    <citation type="submission" date="1998-05" db="EMBL/GenBank/DDBJ databases">
        <authorList>
            <person name="Perl A."/>
            <person name="Bachand G."/>
        </authorList>
    </citation>
    <scope>NUCLEOTIDE SEQUENCE [MRNA]</scope>
</reference>
<reference key="2">
    <citation type="journal article" date="2004" name="Genome Res.">
        <title>The status, quality, and expansion of the NIH full-length cDNA project: the Mammalian Gene Collection (MGC).</title>
        <authorList>
            <consortium name="The MGC Project Team"/>
        </authorList>
    </citation>
    <scope>NUCLEOTIDE SEQUENCE [LARGE SCALE MRNA]</scope>
    <source>
        <tissue>Pituitary</tissue>
    </source>
</reference>
<reference key="3">
    <citation type="submission" date="2007-07" db="UniProtKB">
        <authorList>
            <person name="Lubec G."/>
            <person name="Chen W.-Q."/>
            <person name="Kang S.U."/>
        </authorList>
    </citation>
    <scope>PROTEIN SEQUENCE OF 72-81; 103-121; 125-130; 220-225; 246-265; 270-277 AND 315-321</scope>
    <scope>IDENTIFICATION BY MASS SPECTROMETRY</scope>
    <source>
        <strain>Sprague-Dawley</strain>
        <tissue>Brain</tissue>
        <tissue>Hippocampus</tissue>
    </source>
</reference>
<reference key="4">
    <citation type="journal article" date="2012" name="Nat. Commun.">
        <title>Quantitative maps of protein phosphorylation sites across 14 different rat organs and tissues.</title>
        <authorList>
            <person name="Lundby A."/>
            <person name="Secher A."/>
            <person name="Lage K."/>
            <person name="Nordsborg N.B."/>
            <person name="Dmytriyev A."/>
            <person name="Lundby C."/>
            <person name="Olsen J.V."/>
        </authorList>
    </citation>
    <scope>PHOSPHORYLATION [LARGE SCALE ANALYSIS] AT SER-237</scope>
    <scope>IDENTIFICATION BY MASS SPECTROMETRY [LARGE SCALE ANALYSIS]</scope>
</reference>
<dbReference type="EC" id="2.2.1.2"/>
<dbReference type="EMBL" id="AF069306">
    <property type="protein sequence ID" value="AAG43169.1"/>
    <property type="molecule type" value="mRNA"/>
</dbReference>
<dbReference type="EMBL" id="BC059126">
    <property type="protein sequence ID" value="AAH59126.1"/>
    <property type="molecule type" value="mRNA"/>
</dbReference>
<dbReference type="RefSeq" id="NP_113999.2">
    <property type="nucleotide sequence ID" value="NM_031811.3"/>
</dbReference>
<dbReference type="SMR" id="Q9EQS0"/>
<dbReference type="BioGRID" id="249806">
    <property type="interactions" value="2"/>
</dbReference>
<dbReference type="FunCoup" id="Q9EQS0">
    <property type="interactions" value="2568"/>
</dbReference>
<dbReference type="IntAct" id="Q9EQS0">
    <property type="interactions" value="1"/>
</dbReference>
<dbReference type="STRING" id="10116.ENSRNOP00000024863"/>
<dbReference type="GlyGen" id="Q9EQS0">
    <property type="glycosylation" value="1 site, 1 O-linked glycan (1 site)"/>
</dbReference>
<dbReference type="iPTMnet" id="Q9EQS0"/>
<dbReference type="PhosphoSitePlus" id="Q9EQS0"/>
<dbReference type="jPOST" id="Q9EQS0"/>
<dbReference type="PaxDb" id="10116-ENSRNOP00000024863"/>
<dbReference type="Ensembl" id="ENSRNOT00000024863.7">
    <property type="protein sequence ID" value="ENSRNOP00000024863.4"/>
    <property type="gene ID" value="ENSRNOG00000018367.7"/>
</dbReference>
<dbReference type="GeneID" id="83688"/>
<dbReference type="KEGG" id="rno:83688"/>
<dbReference type="UCSC" id="RGD:620674">
    <property type="organism name" value="rat"/>
</dbReference>
<dbReference type="AGR" id="RGD:620674"/>
<dbReference type="CTD" id="6888"/>
<dbReference type="RGD" id="620674">
    <property type="gene designation" value="Taldo1"/>
</dbReference>
<dbReference type="eggNOG" id="KOG2772">
    <property type="taxonomic scope" value="Eukaryota"/>
</dbReference>
<dbReference type="GeneTree" id="ENSGT00390000017361"/>
<dbReference type="HOGENOM" id="CLU_047470_0_1_1"/>
<dbReference type="InParanoid" id="Q9EQS0"/>
<dbReference type="OMA" id="THAEFLW"/>
<dbReference type="OrthoDB" id="18795at9989"/>
<dbReference type="PhylomeDB" id="Q9EQS0"/>
<dbReference type="TreeFam" id="TF300757"/>
<dbReference type="Reactome" id="R-RNO-163754">
    <property type="pathway name" value="Insulin effects increased synthesis of Xylulose-5-Phosphate"/>
</dbReference>
<dbReference type="Reactome" id="R-RNO-71336">
    <property type="pathway name" value="Pentose phosphate pathway"/>
</dbReference>
<dbReference type="UniPathway" id="UPA00115">
    <property type="reaction ID" value="UER00414"/>
</dbReference>
<dbReference type="PRO" id="PR:Q9EQS0"/>
<dbReference type="Proteomes" id="UP000002494">
    <property type="component" value="Chromosome 1"/>
</dbReference>
<dbReference type="Bgee" id="ENSRNOG00000018367">
    <property type="expression patterns" value="Expressed in jejunum and 20 other cell types or tissues"/>
</dbReference>
<dbReference type="GO" id="GO:0005737">
    <property type="term" value="C:cytoplasm"/>
    <property type="evidence" value="ECO:0000266"/>
    <property type="project" value="RGD"/>
</dbReference>
<dbReference type="GO" id="GO:0005829">
    <property type="term" value="C:cytosol"/>
    <property type="evidence" value="ECO:0000266"/>
    <property type="project" value="RGD"/>
</dbReference>
<dbReference type="GO" id="GO:0005634">
    <property type="term" value="C:nucleus"/>
    <property type="evidence" value="ECO:0000250"/>
    <property type="project" value="UniProtKB"/>
</dbReference>
<dbReference type="GO" id="GO:0030246">
    <property type="term" value="F:carbohydrate binding"/>
    <property type="evidence" value="ECO:0000314"/>
    <property type="project" value="RGD"/>
</dbReference>
<dbReference type="GO" id="GO:0042802">
    <property type="term" value="F:identical protein binding"/>
    <property type="evidence" value="ECO:0000250"/>
    <property type="project" value="UniProtKB"/>
</dbReference>
<dbReference type="GO" id="GO:0048029">
    <property type="term" value="F:monosaccharide binding"/>
    <property type="evidence" value="ECO:0000314"/>
    <property type="project" value="RGD"/>
</dbReference>
<dbReference type="GO" id="GO:0004801">
    <property type="term" value="F:transaldolase activity"/>
    <property type="evidence" value="ECO:0000314"/>
    <property type="project" value="RGD"/>
</dbReference>
<dbReference type="GO" id="GO:0005975">
    <property type="term" value="P:carbohydrate metabolic process"/>
    <property type="evidence" value="ECO:0007669"/>
    <property type="project" value="InterPro"/>
</dbReference>
<dbReference type="GO" id="GO:0006002">
    <property type="term" value="P:fructose 6-phosphate metabolic process"/>
    <property type="evidence" value="ECO:0000314"/>
    <property type="project" value="RGD"/>
</dbReference>
<dbReference type="GO" id="GO:0019682">
    <property type="term" value="P:glyceraldehyde-3-phosphate metabolic process"/>
    <property type="evidence" value="ECO:0000314"/>
    <property type="project" value="RGD"/>
</dbReference>
<dbReference type="GO" id="GO:0006098">
    <property type="term" value="P:pentose-phosphate shunt"/>
    <property type="evidence" value="ECO:0000314"/>
    <property type="project" value="RGD"/>
</dbReference>
<dbReference type="GO" id="GO:0009052">
    <property type="term" value="P:pentose-phosphate shunt, non-oxidative branch"/>
    <property type="evidence" value="ECO:0000314"/>
    <property type="project" value="RGD"/>
</dbReference>
<dbReference type="CDD" id="cd00957">
    <property type="entry name" value="Transaldolase_TalAB"/>
    <property type="match status" value="1"/>
</dbReference>
<dbReference type="FunFam" id="3.20.20.70:FF:000002">
    <property type="entry name" value="Transaldolase"/>
    <property type="match status" value="1"/>
</dbReference>
<dbReference type="Gene3D" id="3.20.20.70">
    <property type="entry name" value="Aldolase class I"/>
    <property type="match status" value="1"/>
</dbReference>
<dbReference type="HAMAP" id="MF_00492">
    <property type="entry name" value="Transaldolase_1"/>
    <property type="match status" value="1"/>
</dbReference>
<dbReference type="InterPro" id="IPR013785">
    <property type="entry name" value="Aldolase_TIM"/>
</dbReference>
<dbReference type="InterPro" id="IPR001585">
    <property type="entry name" value="TAL/FSA"/>
</dbReference>
<dbReference type="InterPro" id="IPR004730">
    <property type="entry name" value="Transaldolase_1"/>
</dbReference>
<dbReference type="InterPro" id="IPR018225">
    <property type="entry name" value="Transaldolase_AS"/>
</dbReference>
<dbReference type="NCBIfam" id="NF009001">
    <property type="entry name" value="PRK12346.1"/>
    <property type="match status" value="1"/>
</dbReference>
<dbReference type="NCBIfam" id="TIGR00874">
    <property type="entry name" value="talAB"/>
    <property type="match status" value="1"/>
</dbReference>
<dbReference type="PANTHER" id="PTHR10683">
    <property type="entry name" value="TRANSALDOLASE"/>
    <property type="match status" value="1"/>
</dbReference>
<dbReference type="PANTHER" id="PTHR10683:SF18">
    <property type="entry name" value="TRANSALDOLASE"/>
    <property type="match status" value="1"/>
</dbReference>
<dbReference type="Pfam" id="PF00923">
    <property type="entry name" value="TAL_FSA"/>
    <property type="match status" value="1"/>
</dbReference>
<dbReference type="SUPFAM" id="SSF51569">
    <property type="entry name" value="Aldolase"/>
    <property type="match status" value="1"/>
</dbReference>
<dbReference type="PROSITE" id="PS01054">
    <property type="entry name" value="TRANSALDOLASE_1"/>
    <property type="match status" value="1"/>
</dbReference>
<dbReference type="PROSITE" id="PS00958">
    <property type="entry name" value="TRANSALDOLASE_2"/>
    <property type="match status" value="1"/>
</dbReference>
<organism>
    <name type="scientific">Rattus norvegicus</name>
    <name type="common">Rat</name>
    <dbReference type="NCBI Taxonomy" id="10116"/>
    <lineage>
        <taxon>Eukaryota</taxon>
        <taxon>Metazoa</taxon>
        <taxon>Chordata</taxon>
        <taxon>Craniata</taxon>
        <taxon>Vertebrata</taxon>
        <taxon>Euteleostomi</taxon>
        <taxon>Mammalia</taxon>
        <taxon>Eutheria</taxon>
        <taxon>Euarchontoglires</taxon>
        <taxon>Glires</taxon>
        <taxon>Rodentia</taxon>
        <taxon>Myomorpha</taxon>
        <taxon>Muroidea</taxon>
        <taxon>Muridae</taxon>
        <taxon>Murinae</taxon>
        <taxon>Rattus</taxon>
    </lineage>
</organism>
<comment type="function">
    <text evidence="2">Catalyzes the rate-limiting step of the non-oxidative phase in the pentose phosphate pathway. Catalyzes the reversible conversion of sedheptulose-7-phosphate and D-glyceraldehyde 3-phosphate into erythrose-4-phosphate and beta-D-fructose 6-phosphate.</text>
</comment>
<comment type="catalytic activity">
    <reaction evidence="1">
        <text>D-sedoheptulose 7-phosphate + D-glyceraldehyde 3-phosphate = D-erythrose 4-phosphate + beta-D-fructose 6-phosphate</text>
        <dbReference type="Rhea" id="RHEA:17053"/>
        <dbReference type="ChEBI" id="CHEBI:16897"/>
        <dbReference type="ChEBI" id="CHEBI:57483"/>
        <dbReference type="ChEBI" id="CHEBI:57634"/>
        <dbReference type="ChEBI" id="CHEBI:59776"/>
        <dbReference type="EC" id="2.2.1.2"/>
    </reaction>
    <physiologicalReaction direction="left-to-right" evidence="1">
        <dbReference type="Rhea" id="RHEA:17054"/>
    </physiologicalReaction>
    <physiologicalReaction direction="right-to-left" evidence="1">
        <dbReference type="Rhea" id="RHEA:17055"/>
    </physiologicalReaction>
</comment>
<comment type="pathway">
    <text evidence="2">Carbohydrate degradation; pentose phosphate pathway; D-glyceraldehyde 3-phosphate and beta-D-fructose 6-phosphate from D-ribose 5-phosphate and D-xylulose 5-phosphate (non-oxidative stage): step 2/3.</text>
</comment>
<comment type="subunit">
    <text evidence="2">Homodimer. Interacts with KPNA1 and KPNA4.</text>
</comment>
<comment type="subcellular location">
    <subcellularLocation>
        <location evidence="2">Nucleus</location>
    </subcellularLocation>
    <subcellularLocation>
        <location evidence="2">Cytoplasm</location>
    </subcellularLocation>
    <text evidence="2">Shuttles between the nucleus and the cytoplasm. Actively transported into the nucleus in an importin alpha/beta-dependent manner. Exported into the cytoplasm by CRM1.</text>
</comment>
<comment type="domain">
    <text evidence="2">The first 10 amino acids are essential for nuclear localization.</text>
</comment>
<comment type="similarity">
    <text evidence="3">Belongs to the transaldolase family. Type 1 subfamily.</text>
</comment>
<evidence type="ECO:0000250" key="1">
    <source>
        <dbReference type="UniProtKB" id="P37837"/>
    </source>
</evidence>
<evidence type="ECO:0000250" key="2">
    <source>
        <dbReference type="UniProtKB" id="Q93092"/>
    </source>
</evidence>
<evidence type="ECO:0000305" key="3"/>
<evidence type="ECO:0007744" key="4">
    <source>
    </source>
</evidence>
<keyword id="KW-0007">Acetylation</keyword>
<keyword id="KW-0963">Cytoplasm</keyword>
<keyword id="KW-0903">Direct protein sequencing</keyword>
<keyword id="KW-0539">Nucleus</keyword>
<keyword id="KW-0570">Pentose shunt</keyword>
<keyword id="KW-0597">Phosphoprotein</keyword>
<keyword id="KW-1185">Reference proteome</keyword>
<keyword id="KW-0704">Schiff base</keyword>
<keyword id="KW-0808">Transferase</keyword>
<accession>Q9EQS0</accession>
<accession>Q6PCV1</accession>
<feature type="chain" id="PRO_0000173567" description="Transaldolase">
    <location>
        <begin position="1"/>
        <end position="337"/>
    </location>
</feature>
<feature type="short sequence motif" description="Nuclear localization signal" evidence="2">
    <location>
        <begin position="1"/>
        <end position="10"/>
    </location>
</feature>
<feature type="active site" description="Schiff-base intermediate with substrate" evidence="1">
    <location>
        <position position="142"/>
    </location>
</feature>
<feature type="modified residue" description="N6-acetyllysine" evidence="2">
    <location>
        <position position="115"/>
    </location>
</feature>
<feature type="modified residue" description="N6-acetyllysine" evidence="1">
    <location>
        <position position="219"/>
    </location>
</feature>
<feature type="modified residue" description="Phosphoserine" evidence="4">
    <location>
        <position position="237"/>
    </location>
</feature>
<feature type="modified residue" description="Phosphoserine" evidence="1">
    <location>
        <position position="256"/>
    </location>
</feature>
<feature type="modified residue" description="N6-acetyllysine" evidence="1">
    <location>
        <position position="269"/>
    </location>
</feature>
<feature type="modified residue" description="N6-acetyllysine" evidence="1">
    <location>
        <position position="286"/>
    </location>
</feature>
<feature type="modified residue" description="N6-acetyllysine" evidence="1">
    <location>
        <position position="321"/>
    </location>
</feature>
<feature type="sequence conflict" description="In Ref. 1; AAG43169." evidence="3" ref="1">
    <original>P</original>
    <variation>L</variation>
    <location>
        <position position="100"/>
    </location>
</feature>
<protein>
    <recommendedName>
        <fullName evidence="1">Transaldolase</fullName>
        <ecNumber>2.2.1.2</ecNumber>
    </recommendedName>
</protein>
<name>TALDO_RAT</name>
<proteinExistence type="evidence at protein level"/>
<sequence>MSGSPVKRQRMESALDQLKQFTTVVADTGDFNAIDEYKPQDATTNPSLILAAAQMPAYQELVEEAIAYGKKLGGPQEEQIKNAIDKLFVLFGAEILKKIPGRVSTEVDARLSFDKDAMVARARRIIELYKEAGISKDRILIKLSSTWEGIQAGKELEEQHGIHCNMTLLFSFAQAVACAEAGVTLISPFVGRILDWHVANTDKKSYEPQEDPGVKSVTKIYNYYKKFGYKTIVMGASFRNTGEIKALAGCDFLTISPKLLGELLKDSSKLAPTLSVKAAQTSDLEKIHLDEKAFRWLHNEDQMAVEKLSDGIRKFAADAIKLERMLTERMFSAENGK</sequence>
<gene>
    <name type="primary">Taldo1</name>
</gene>